<feature type="chain" id="PRO_0000061961" description="N-acetyl-L-cysteine deacetylase">
    <location>
        <begin position="1"/>
        <end position="416"/>
    </location>
</feature>
<feature type="binding site" evidence="1">
    <location>
        <position position="128"/>
    </location>
    <ligand>
        <name>Zn(2+)</name>
        <dbReference type="ChEBI" id="CHEBI:29105"/>
        <label>1</label>
    </ligand>
</feature>
<feature type="binding site" evidence="1">
    <location>
        <position position="128"/>
    </location>
    <ligand>
        <name>Zn(2+)</name>
        <dbReference type="ChEBI" id="CHEBI:29105"/>
        <label>2</label>
    </ligand>
</feature>
<feature type="binding site" evidence="1">
    <location>
        <position position="130"/>
    </location>
    <ligand>
        <name>Zn(2+)</name>
        <dbReference type="ChEBI" id="CHEBI:29105"/>
        <label>2</label>
    </ligand>
</feature>
<feature type="binding site" evidence="1">
    <location>
        <position position="164"/>
    </location>
    <ligand>
        <name>Zn(2+)</name>
        <dbReference type="ChEBI" id="CHEBI:29105"/>
        <label>1</label>
    </ligand>
</feature>
<feature type="binding site" evidence="1">
    <location>
        <position position="188"/>
    </location>
    <ligand>
        <name>Zn(2+)</name>
        <dbReference type="ChEBI" id="CHEBI:29105"/>
        <label>2</label>
    </ligand>
</feature>
<feature type="binding site" evidence="1">
    <location>
        <position position="380"/>
    </location>
    <ligand>
        <name>Zn(2+)</name>
        <dbReference type="ChEBI" id="CHEBI:29105"/>
        <label>1</label>
    </ligand>
</feature>
<keyword id="KW-0170">Cobalt</keyword>
<keyword id="KW-0378">Hydrolase</keyword>
<keyword id="KW-0479">Metal-binding</keyword>
<keyword id="KW-1185">Reference proteome</keyword>
<keyword id="KW-0862">Zinc</keyword>
<organism>
    <name type="scientific">Bacillus subtilis (strain 168)</name>
    <dbReference type="NCBI Taxonomy" id="224308"/>
    <lineage>
        <taxon>Bacteria</taxon>
        <taxon>Bacillati</taxon>
        <taxon>Bacillota</taxon>
        <taxon>Bacilli</taxon>
        <taxon>Bacillales</taxon>
        <taxon>Bacillaceae</taxon>
        <taxon>Bacillus</taxon>
    </lineage>
</organism>
<evidence type="ECO:0000250" key="1">
    <source>
        <dbReference type="UniProtKB" id="P54955"/>
    </source>
</evidence>
<evidence type="ECO:0000269" key="2">
    <source>
    </source>
</evidence>
<evidence type="ECO:0000303" key="3">
    <source>
    </source>
</evidence>
<evidence type="ECO:0000305" key="4"/>
<evidence type="ECO:0000305" key="5">
    <source>
    </source>
</evidence>
<protein>
    <recommendedName>
        <fullName evidence="3">N-acetyl-L-cysteine deacetylase</fullName>
        <ecNumber evidence="2">3.5.1.-</ecNumber>
    </recommendedName>
</protein>
<name>SNDA_BACSU</name>
<gene>
    <name evidence="3" type="primary">sndA</name>
    <name type="synonym">ytnL</name>
    <name type="ordered locus">BSU29290</name>
</gene>
<proteinExistence type="evidence at protein level"/>
<sequence length="416" mass="45239">MSLDYWRNIEGSYPYQTTGNDILTLKEESNPVNLSTLEKQLIGIRRHLHQYPELSKEEFETTAFIKKCLKEKGIQIRPTALKTGVFADIAGESEGPAIALRADIDALPIEEKTGLPYASKHKGIMHACGHDFHTAALLGAAFLLKENQDSLKGKIRLLFQPAEEAGAGATKVIEDGQLDGIDAVIGLHNKPDIAVGTVGLKTGPLMAAVDRFKVEIEGKGAHAALPHNGFDPIIGASQLIVALQTIVSRNVNPLQSAILTVGKINGGSTWNVIPDTVVIEGTVRTFDSEVRNQVKQRFFAVTEQISAAFSLKANVKWHSGPPPLCNDEAITGLVRDAAHKAKLQVIDPAPSTAGEDFAYYLEHIPGSFAFFGTDGDHDWHHPAFTIDETAIIKASYFLYESAKRLLDSNEESKISD</sequence>
<reference key="1">
    <citation type="journal article" date="1997" name="Microbiology">
        <title>Sequencing and functional annotation of the Bacillus subtilis genes in the 200 kb rrnB-dnaB region.</title>
        <authorList>
            <person name="Lapidus A."/>
            <person name="Galleron N."/>
            <person name="Sorokin A."/>
            <person name="Ehrlich S.D."/>
        </authorList>
    </citation>
    <scope>NUCLEOTIDE SEQUENCE [GENOMIC DNA]</scope>
    <source>
        <strain>168</strain>
    </source>
</reference>
<reference key="2">
    <citation type="journal article" date="1997" name="Nature">
        <title>The complete genome sequence of the Gram-positive bacterium Bacillus subtilis.</title>
        <authorList>
            <person name="Kunst F."/>
            <person name="Ogasawara N."/>
            <person name="Moszer I."/>
            <person name="Albertini A.M."/>
            <person name="Alloni G."/>
            <person name="Azevedo V."/>
            <person name="Bertero M.G."/>
            <person name="Bessieres P."/>
            <person name="Bolotin A."/>
            <person name="Borchert S."/>
            <person name="Borriss R."/>
            <person name="Boursier L."/>
            <person name="Brans A."/>
            <person name="Braun M."/>
            <person name="Brignell S.C."/>
            <person name="Bron S."/>
            <person name="Brouillet S."/>
            <person name="Bruschi C.V."/>
            <person name="Caldwell B."/>
            <person name="Capuano V."/>
            <person name="Carter N.M."/>
            <person name="Choi S.-K."/>
            <person name="Codani J.-J."/>
            <person name="Connerton I.F."/>
            <person name="Cummings N.J."/>
            <person name="Daniel R.A."/>
            <person name="Denizot F."/>
            <person name="Devine K.M."/>
            <person name="Duesterhoeft A."/>
            <person name="Ehrlich S.D."/>
            <person name="Emmerson P.T."/>
            <person name="Entian K.-D."/>
            <person name="Errington J."/>
            <person name="Fabret C."/>
            <person name="Ferrari E."/>
            <person name="Foulger D."/>
            <person name="Fritz C."/>
            <person name="Fujita M."/>
            <person name="Fujita Y."/>
            <person name="Fuma S."/>
            <person name="Galizzi A."/>
            <person name="Galleron N."/>
            <person name="Ghim S.-Y."/>
            <person name="Glaser P."/>
            <person name="Goffeau A."/>
            <person name="Golightly E.J."/>
            <person name="Grandi G."/>
            <person name="Guiseppi G."/>
            <person name="Guy B.J."/>
            <person name="Haga K."/>
            <person name="Haiech J."/>
            <person name="Harwood C.R."/>
            <person name="Henaut A."/>
            <person name="Hilbert H."/>
            <person name="Holsappel S."/>
            <person name="Hosono S."/>
            <person name="Hullo M.-F."/>
            <person name="Itaya M."/>
            <person name="Jones L.-M."/>
            <person name="Joris B."/>
            <person name="Karamata D."/>
            <person name="Kasahara Y."/>
            <person name="Klaerr-Blanchard M."/>
            <person name="Klein C."/>
            <person name="Kobayashi Y."/>
            <person name="Koetter P."/>
            <person name="Koningstein G."/>
            <person name="Krogh S."/>
            <person name="Kumano M."/>
            <person name="Kurita K."/>
            <person name="Lapidus A."/>
            <person name="Lardinois S."/>
            <person name="Lauber J."/>
            <person name="Lazarevic V."/>
            <person name="Lee S.-M."/>
            <person name="Levine A."/>
            <person name="Liu H."/>
            <person name="Masuda S."/>
            <person name="Mauel C."/>
            <person name="Medigue C."/>
            <person name="Medina N."/>
            <person name="Mellado R.P."/>
            <person name="Mizuno M."/>
            <person name="Moestl D."/>
            <person name="Nakai S."/>
            <person name="Noback M."/>
            <person name="Noone D."/>
            <person name="O'Reilly M."/>
            <person name="Ogawa K."/>
            <person name="Ogiwara A."/>
            <person name="Oudega B."/>
            <person name="Park S.-H."/>
            <person name="Parro V."/>
            <person name="Pohl T.M."/>
            <person name="Portetelle D."/>
            <person name="Porwollik S."/>
            <person name="Prescott A.M."/>
            <person name="Presecan E."/>
            <person name="Pujic P."/>
            <person name="Purnelle B."/>
            <person name="Rapoport G."/>
            <person name="Rey M."/>
            <person name="Reynolds S."/>
            <person name="Rieger M."/>
            <person name="Rivolta C."/>
            <person name="Rocha E."/>
            <person name="Roche B."/>
            <person name="Rose M."/>
            <person name="Sadaie Y."/>
            <person name="Sato T."/>
            <person name="Scanlan E."/>
            <person name="Schleich S."/>
            <person name="Schroeter R."/>
            <person name="Scoffone F."/>
            <person name="Sekiguchi J."/>
            <person name="Sekowska A."/>
            <person name="Seror S.J."/>
            <person name="Serror P."/>
            <person name="Shin B.-S."/>
            <person name="Soldo B."/>
            <person name="Sorokin A."/>
            <person name="Tacconi E."/>
            <person name="Takagi T."/>
            <person name="Takahashi H."/>
            <person name="Takemaru K."/>
            <person name="Takeuchi M."/>
            <person name="Tamakoshi A."/>
            <person name="Tanaka T."/>
            <person name="Terpstra P."/>
            <person name="Tognoni A."/>
            <person name="Tosato V."/>
            <person name="Uchiyama S."/>
            <person name="Vandenbol M."/>
            <person name="Vannier F."/>
            <person name="Vassarotti A."/>
            <person name="Viari A."/>
            <person name="Wambutt R."/>
            <person name="Wedler E."/>
            <person name="Wedler H."/>
            <person name="Weitzenegger T."/>
            <person name="Winters P."/>
            <person name="Wipat A."/>
            <person name="Yamamoto H."/>
            <person name="Yamane K."/>
            <person name="Yasumoto K."/>
            <person name="Yata K."/>
            <person name="Yoshida K."/>
            <person name="Yoshikawa H.-F."/>
            <person name="Zumstein E."/>
            <person name="Yoshikawa H."/>
            <person name="Danchin A."/>
        </authorList>
    </citation>
    <scope>NUCLEOTIDE SEQUENCE [LARGE SCALE GENOMIC DNA]</scope>
    <source>
        <strain>168</strain>
    </source>
</reference>
<reference key="3">
    <citation type="journal article" date="2022" name="Biochemistry">
        <title>Cysteine Dealkylation in Bacillus subtilis by a Novel Flavin-Dependent Monooxygenase.</title>
        <authorList>
            <person name="Hazra S."/>
            <person name="Bhandari D.M."/>
            <person name="Krishnamoorthy K."/>
            <person name="Sekowska A."/>
            <person name="Danchin A."/>
            <person name="Begley T.P."/>
        </authorList>
    </citation>
    <scope>FUNCTION</scope>
    <scope>CATALYTIC ACTIVITY</scope>
    <scope>COFACTOR</scope>
    <scope>PATHWAY</scope>
</reference>
<dbReference type="EC" id="3.5.1.-" evidence="2"/>
<dbReference type="EMBL" id="AF008220">
    <property type="protein sequence ID" value="AAC00334.1"/>
    <property type="molecule type" value="Genomic_DNA"/>
</dbReference>
<dbReference type="EMBL" id="AL009126">
    <property type="protein sequence ID" value="CAB14889.1"/>
    <property type="molecule type" value="Genomic_DNA"/>
</dbReference>
<dbReference type="PIR" id="E69640">
    <property type="entry name" value="E69640"/>
</dbReference>
<dbReference type="RefSeq" id="NP_390807.1">
    <property type="nucleotide sequence ID" value="NC_000964.3"/>
</dbReference>
<dbReference type="RefSeq" id="WP_003229395.1">
    <property type="nucleotide sequence ID" value="NZ_OZ025638.1"/>
</dbReference>
<dbReference type="SMR" id="O34980"/>
<dbReference type="FunCoup" id="O34980">
    <property type="interactions" value="349"/>
</dbReference>
<dbReference type="STRING" id="224308.BSU29290"/>
<dbReference type="MEROPS" id="M20.015"/>
<dbReference type="PaxDb" id="224308-BSU29290"/>
<dbReference type="EnsemblBacteria" id="CAB14889">
    <property type="protein sequence ID" value="CAB14889"/>
    <property type="gene ID" value="BSU_29290"/>
</dbReference>
<dbReference type="GeneID" id="936157"/>
<dbReference type="KEGG" id="bsu:BSU29290"/>
<dbReference type="PATRIC" id="fig|224308.179.peg.3183"/>
<dbReference type="eggNOG" id="COG1473">
    <property type="taxonomic scope" value="Bacteria"/>
</dbReference>
<dbReference type="InParanoid" id="O34980"/>
<dbReference type="OrthoDB" id="9776731at2"/>
<dbReference type="PhylomeDB" id="O34980"/>
<dbReference type="BioCyc" id="BSUB:BSU29290-MONOMER"/>
<dbReference type="BioCyc" id="MetaCyc:BSU29290-MONOMER"/>
<dbReference type="Proteomes" id="UP000001570">
    <property type="component" value="Chromosome"/>
</dbReference>
<dbReference type="GO" id="GO:0016787">
    <property type="term" value="F:hydrolase activity"/>
    <property type="evidence" value="ECO:0000318"/>
    <property type="project" value="GO_Central"/>
</dbReference>
<dbReference type="GO" id="GO:0046872">
    <property type="term" value="F:metal ion binding"/>
    <property type="evidence" value="ECO:0007669"/>
    <property type="project" value="UniProtKB-KW"/>
</dbReference>
<dbReference type="CDD" id="cd05669">
    <property type="entry name" value="M20_Acy1_YxeP-like"/>
    <property type="match status" value="1"/>
</dbReference>
<dbReference type="FunFam" id="3.30.70.360:FF:000001">
    <property type="entry name" value="N-acetyldiaminopimelate deacetylase"/>
    <property type="match status" value="1"/>
</dbReference>
<dbReference type="FunFam" id="3.40.630.10:FF:000006">
    <property type="entry name" value="N-acetyldiaminopimelate deacetylase"/>
    <property type="match status" value="1"/>
</dbReference>
<dbReference type="Gene3D" id="3.30.70.360">
    <property type="match status" value="1"/>
</dbReference>
<dbReference type="Gene3D" id="3.40.630.10">
    <property type="entry name" value="Zn peptidases"/>
    <property type="match status" value="1"/>
</dbReference>
<dbReference type="InterPro" id="IPR017439">
    <property type="entry name" value="Amidohydrolase"/>
</dbReference>
<dbReference type="InterPro" id="IPR036264">
    <property type="entry name" value="Bact_exopeptidase_dim_dom"/>
</dbReference>
<dbReference type="InterPro" id="IPR002933">
    <property type="entry name" value="Peptidase_M20"/>
</dbReference>
<dbReference type="InterPro" id="IPR011650">
    <property type="entry name" value="Peptidase_M20_dimer"/>
</dbReference>
<dbReference type="InterPro" id="IPR033846">
    <property type="entry name" value="YxeP-like"/>
</dbReference>
<dbReference type="NCBIfam" id="TIGR01891">
    <property type="entry name" value="amidohydrolases"/>
    <property type="match status" value="1"/>
</dbReference>
<dbReference type="PANTHER" id="PTHR11014:SF63">
    <property type="entry name" value="METALLOPEPTIDASE, PUTATIVE (AFU_ORTHOLOGUE AFUA_6G09600)-RELATED"/>
    <property type="match status" value="1"/>
</dbReference>
<dbReference type="PANTHER" id="PTHR11014">
    <property type="entry name" value="PEPTIDASE M20 FAMILY MEMBER"/>
    <property type="match status" value="1"/>
</dbReference>
<dbReference type="Pfam" id="PF07687">
    <property type="entry name" value="M20_dimer"/>
    <property type="match status" value="1"/>
</dbReference>
<dbReference type="Pfam" id="PF01546">
    <property type="entry name" value="Peptidase_M20"/>
    <property type="match status" value="1"/>
</dbReference>
<dbReference type="PIRSF" id="PIRSF005962">
    <property type="entry name" value="Pept_M20D_amidohydro"/>
    <property type="match status" value="1"/>
</dbReference>
<dbReference type="SUPFAM" id="SSF55031">
    <property type="entry name" value="Bacterial exopeptidase dimerisation domain"/>
    <property type="match status" value="1"/>
</dbReference>
<dbReference type="SUPFAM" id="SSF53187">
    <property type="entry name" value="Zn-dependent exopeptidases"/>
    <property type="match status" value="1"/>
</dbReference>
<comment type="function">
    <text evidence="2">Involved in a cysteine salvage pathway from S-alkylcysteine. Catalyzes the last step in this pathway, i.e. the deacetylation of N-acetyl-L-cysteine. This pathway is likely important in the catabolism of alkylated cysteine generated by proteolysis of alkylated glutathione formed in the detoxification of a wide range of electrophiles.</text>
</comment>
<comment type="catalytic activity">
    <reaction evidence="2">
        <text>N-acetyl-L-cysteine + H2O = L-cysteine + acetate</text>
        <dbReference type="Rhea" id="RHEA:75515"/>
        <dbReference type="ChEBI" id="CHEBI:15377"/>
        <dbReference type="ChEBI" id="CHEBI:30089"/>
        <dbReference type="ChEBI" id="CHEBI:35235"/>
        <dbReference type="ChEBI" id="CHEBI:78236"/>
    </reaction>
    <physiologicalReaction direction="left-to-right" evidence="5">
        <dbReference type="Rhea" id="RHEA:75516"/>
    </physiologicalReaction>
</comment>
<comment type="cofactor">
    <cofactor evidence="2">
        <name>Zn(2+)</name>
        <dbReference type="ChEBI" id="CHEBI:29105"/>
    </cofactor>
    <cofactor evidence="2">
        <name>Co(2+)</name>
        <dbReference type="ChEBI" id="CHEBI:48828"/>
    </cofactor>
    <text evidence="1 2">Binds 2 divalent metal cations per subunit (By similarity). Is most efficient with Zn(2+) and Co(2+), has only a small activity with Ni(2+) and Mn(2+) and no activity with Mg(2+), Fe(3+), and Fe(2+) (PubMed:35584544).</text>
</comment>
<comment type="pathway">
    <text evidence="5">Amino-acid metabolism.</text>
</comment>
<comment type="similarity">
    <text evidence="4">Belongs to the peptidase M20 family.</text>
</comment>
<accession>O34980</accession>